<dbReference type="EMBL" id="AF321516">
    <property type="protein sequence ID" value="AAK07426.1"/>
    <property type="molecule type" value="Genomic_DNA"/>
</dbReference>
<dbReference type="EMBL" id="BA000021">
    <property type="protein sequence ID" value="BAC24405.1"/>
    <property type="molecule type" value="Genomic_DNA"/>
</dbReference>
<dbReference type="SMR" id="Q9ANS0"/>
<dbReference type="STRING" id="36870.gene:10368752"/>
<dbReference type="KEGG" id="wbr:mopB"/>
<dbReference type="eggNOG" id="COG0234">
    <property type="taxonomic scope" value="Bacteria"/>
</dbReference>
<dbReference type="HOGENOM" id="CLU_132825_1_1_6"/>
<dbReference type="OrthoDB" id="9806791at2"/>
<dbReference type="Proteomes" id="UP000000562">
    <property type="component" value="Chromosome"/>
</dbReference>
<dbReference type="GO" id="GO:0005737">
    <property type="term" value="C:cytoplasm"/>
    <property type="evidence" value="ECO:0007669"/>
    <property type="project" value="UniProtKB-SubCell"/>
</dbReference>
<dbReference type="GO" id="GO:0005524">
    <property type="term" value="F:ATP binding"/>
    <property type="evidence" value="ECO:0007669"/>
    <property type="project" value="InterPro"/>
</dbReference>
<dbReference type="GO" id="GO:0046872">
    <property type="term" value="F:metal ion binding"/>
    <property type="evidence" value="ECO:0007669"/>
    <property type="project" value="TreeGrafter"/>
</dbReference>
<dbReference type="GO" id="GO:0044183">
    <property type="term" value="F:protein folding chaperone"/>
    <property type="evidence" value="ECO:0007669"/>
    <property type="project" value="InterPro"/>
</dbReference>
<dbReference type="GO" id="GO:0051087">
    <property type="term" value="F:protein-folding chaperone binding"/>
    <property type="evidence" value="ECO:0007669"/>
    <property type="project" value="TreeGrafter"/>
</dbReference>
<dbReference type="GO" id="GO:0051082">
    <property type="term" value="F:unfolded protein binding"/>
    <property type="evidence" value="ECO:0007669"/>
    <property type="project" value="TreeGrafter"/>
</dbReference>
<dbReference type="GO" id="GO:0051085">
    <property type="term" value="P:chaperone cofactor-dependent protein refolding"/>
    <property type="evidence" value="ECO:0007669"/>
    <property type="project" value="TreeGrafter"/>
</dbReference>
<dbReference type="CDD" id="cd00320">
    <property type="entry name" value="cpn10"/>
    <property type="match status" value="1"/>
</dbReference>
<dbReference type="FunFam" id="2.30.33.40:FF:000001">
    <property type="entry name" value="10 kDa chaperonin"/>
    <property type="match status" value="1"/>
</dbReference>
<dbReference type="Gene3D" id="2.30.33.40">
    <property type="entry name" value="GroES chaperonin"/>
    <property type="match status" value="1"/>
</dbReference>
<dbReference type="HAMAP" id="MF_00580">
    <property type="entry name" value="CH10"/>
    <property type="match status" value="1"/>
</dbReference>
<dbReference type="InterPro" id="IPR020818">
    <property type="entry name" value="Chaperonin_GroES"/>
</dbReference>
<dbReference type="InterPro" id="IPR037124">
    <property type="entry name" value="Chaperonin_GroES_sf"/>
</dbReference>
<dbReference type="InterPro" id="IPR018369">
    <property type="entry name" value="Chaprnonin_Cpn10_CS"/>
</dbReference>
<dbReference type="InterPro" id="IPR011032">
    <property type="entry name" value="GroES-like_sf"/>
</dbReference>
<dbReference type="NCBIfam" id="NF001526">
    <property type="entry name" value="PRK00364.1-1"/>
    <property type="match status" value="1"/>
</dbReference>
<dbReference type="NCBIfam" id="NF001527">
    <property type="entry name" value="PRK00364.1-2"/>
    <property type="match status" value="1"/>
</dbReference>
<dbReference type="NCBIfam" id="NF001531">
    <property type="entry name" value="PRK00364.2-2"/>
    <property type="match status" value="1"/>
</dbReference>
<dbReference type="PANTHER" id="PTHR10772">
    <property type="entry name" value="10 KDA HEAT SHOCK PROTEIN"/>
    <property type="match status" value="1"/>
</dbReference>
<dbReference type="PANTHER" id="PTHR10772:SF58">
    <property type="entry name" value="CO-CHAPERONIN GROES"/>
    <property type="match status" value="1"/>
</dbReference>
<dbReference type="Pfam" id="PF00166">
    <property type="entry name" value="Cpn10"/>
    <property type="match status" value="1"/>
</dbReference>
<dbReference type="PRINTS" id="PR00297">
    <property type="entry name" value="CHAPERONIN10"/>
</dbReference>
<dbReference type="SMART" id="SM00883">
    <property type="entry name" value="Cpn10"/>
    <property type="match status" value="1"/>
</dbReference>
<dbReference type="SUPFAM" id="SSF50129">
    <property type="entry name" value="GroES-like"/>
    <property type="match status" value="1"/>
</dbReference>
<dbReference type="PROSITE" id="PS00681">
    <property type="entry name" value="CHAPERONINS_CPN10"/>
    <property type="match status" value="1"/>
</dbReference>
<feature type="chain" id="PRO_0000174900" description="Co-chaperonin GroES">
    <location>
        <begin position="1"/>
        <end position="97"/>
    </location>
</feature>
<gene>
    <name evidence="1" type="primary">groES</name>
    <name evidence="1" type="synonym">groS</name>
    <name type="synonym">mopB</name>
    <name type="ordered locus">WIGBR2590</name>
</gene>
<organism>
    <name type="scientific">Wigglesworthia glossinidia brevipalpis</name>
    <dbReference type="NCBI Taxonomy" id="36870"/>
    <lineage>
        <taxon>Bacteria</taxon>
        <taxon>Pseudomonadati</taxon>
        <taxon>Pseudomonadota</taxon>
        <taxon>Gammaproteobacteria</taxon>
        <taxon>Enterobacterales</taxon>
        <taxon>Erwiniaceae</taxon>
        <taxon>Wigglesworthia</taxon>
    </lineage>
</organism>
<keyword id="KW-0143">Chaperone</keyword>
<keyword id="KW-0963">Cytoplasm</keyword>
<keyword id="KW-1185">Reference proteome</keyword>
<protein>
    <recommendedName>
        <fullName evidence="1">Co-chaperonin GroES</fullName>
    </recommendedName>
    <alternativeName>
        <fullName evidence="1">10 kDa chaperonin</fullName>
    </alternativeName>
    <alternativeName>
        <fullName evidence="1">Chaperonin-10</fullName>
        <shortName evidence="1">Cpn10</shortName>
    </alternativeName>
</protein>
<comment type="function">
    <text evidence="1">Together with the chaperonin GroEL, plays an essential role in assisting protein folding. The GroEL-GroES system forms a nano-cage that allows encapsulation of the non-native substrate proteins and provides a physical environment optimized to promote and accelerate protein folding. GroES binds to the apical surface of the GroEL ring, thereby capping the opening of the GroEL channel.</text>
</comment>
<comment type="subunit">
    <text evidence="1">Heptamer of 7 subunits arranged in a ring. Interacts with the chaperonin GroEL.</text>
</comment>
<comment type="subcellular location">
    <subcellularLocation>
        <location evidence="1">Cytoplasm</location>
    </subcellularLocation>
</comment>
<comment type="similarity">
    <text evidence="1 2">Belongs to the GroES chaperonin family.</text>
</comment>
<reference key="1">
    <citation type="journal article" date="2001" name="J. Bacteriol.">
        <title>Genome size determination and coding capacity of Sodalis glossinidius, an enteric symbiont of tsetse flies, as revealed by hybridization to Escherichia coli gene arrays.</title>
        <authorList>
            <person name="Akman L."/>
            <person name="Rio R.V.M."/>
            <person name="Beard C.B."/>
            <person name="Aksoy S."/>
        </authorList>
    </citation>
    <scope>NUCLEOTIDE SEQUENCE [GENOMIC DNA]</scope>
</reference>
<reference key="2">
    <citation type="journal article" date="2002" name="Nat. Genet.">
        <title>Genome sequence of the endocellular obligate symbiont of tsetse flies, Wigglesworthia glossinidia.</title>
        <authorList>
            <person name="Akman L."/>
            <person name="Yamashita A."/>
            <person name="Watanabe H."/>
            <person name="Oshima K."/>
            <person name="Shiba T."/>
            <person name="Hattori M."/>
            <person name="Aksoy S."/>
        </authorList>
    </citation>
    <scope>NUCLEOTIDE SEQUENCE [LARGE SCALE GENOMIC DNA]</scope>
</reference>
<proteinExistence type="inferred from homology"/>
<evidence type="ECO:0000255" key="1">
    <source>
        <dbReference type="HAMAP-Rule" id="MF_00580"/>
    </source>
</evidence>
<evidence type="ECO:0000305" key="2"/>
<name>CH10_WIGBR</name>
<sequence length="97" mass="10415">MKIRPLHDRVIIKRKEAESKSAGGIVLTGSAAGKSTRGKVLAVGNGRILDNGETKPLDVKIGDIVIFNDGYGVKVEKIDNDEVLIMSESDILAIVEK</sequence>
<accession>Q9ANS0</accession>